<organism>
    <name type="scientific">Saccharomyces cerevisiae (strain ATCC 204508 / S288c)</name>
    <name type="common">Baker's yeast</name>
    <dbReference type="NCBI Taxonomy" id="559292"/>
    <lineage>
        <taxon>Eukaryota</taxon>
        <taxon>Fungi</taxon>
        <taxon>Dikarya</taxon>
        <taxon>Ascomycota</taxon>
        <taxon>Saccharomycotina</taxon>
        <taxon>Saccharomycetes</taxon>
        <taxon>Saccharomycetales</taxon>
        <taxon>Saccharomycetaceae</taxon>
        <taxon>Saccharomyces</taxon>
    </lineage>
</organism>
<comment type="function">
    <text>The S.cerevisiae Ras proteins modulate the activity of the adenylate cyclase catalytic subunit and therefore affect the biosynthesis of cyclic-AMP.</text>
</comment>
<comment type="catalytic activity">
    <reaction evidence="1">
        <text>GTP + H2O = GDP + phosphate + H(+)</text>
        <dbReference type="Rhea" id="RHEA:19669"/>
        <dbReference type="ChEBI" id="CHEBI:15377"/>
        <dbReference type="ChEBI" id="CHEBI:15378"/>
        <dbReference type="ChEBI" id="CHEBI:37565"/>
        <dbReference type="ChEBI" id="CHEBI:43474"/>
        <dbReference type="ChEBI" id="CHEBI:58189"/>
        <dbReference type="EC" id="3.6.5.2"/>
    </reaction>
</comment>
<comment type="activity regulation">
    <text>Alternates between an inactive form bound to GDP and an active form bound to GTP. Activated by guanine nucleotide-exchange factor (GEF) CDC25 and inactivated by GTPase-activating proteins (GAPs) IRA1 and IRA2.</text>
</comment>
<comment type="interaction">
    <interactant intactId="EBI-14838">
        <id>P01120</id>
    </interactant>
    <interactant intactId="EBI-4237">
        <id>P04821</id>
        <label>CDC25</label>
    </interactant>
    <organismsDiffer>false</organismsDiffer>
    <experiments>2</experiments>
</comment>
<comment type="interaction">
    <interactant intactId="EBI-14838">
        <id>P01120</id>
    </interactant>
    <interactant intactId="EBI-10243">
        <id>P07866</id>
        <label>LTE1</label>
    </interactant>
    <organismsDiffer>false</organismsDiffer>
    <experiments>5</experiments>
</comment>
<comment type="interaction">
    <interactant intactId="EBI-14838">
        <id>P01120</id>
    </interactant>
    <interactant intactId="EBI-21779">
        <id>P39109</id>
        <label>YCF1</label>
    </interactant>
    <organismsDiffer>false</organismsDiffer>
    <experiments>2</experiments>
</comment>
<comment type="interaction">
    <interactant intactId="EBI-14838">
        <id>P01120</id>
    </interactant>
    <interactant intactId="EBI-365996">
        <id>P04049</id>
        <label>RAF1</label>
    </interactant>
    <organismsDiffer>true</organismsDiffer>
    <experiments>2</experiments>
</comment>
<comment type="subcellular location">
    <subcellularLocation>
        <location>Cell membrane</location>
        <topology>Lipid-anchor</topology>
    </subcellularLocation>
</comment>
<comment type="PTM">
    <text evidence="5 6 7 10">Farnesylated by RAM1-RAM2, which is required for targeting RAS2 to the cytoplasmic site of the endoplasmic reticulum, where proteolytic processing of the C-terminus by RCE1 and methylation of the resulting carboxyl group by STE14 occurs.</text>
</comment>
<comment type="PTM">
    <text evidence="6">Palmitoylated by the ERF2-SHR5 complex, which is required for proper plasma membrane localization of RAS2.</text>
</comment>
<comment type="miscellaneous">
    <text>RAS2 is necessary for a normal response to nutrient limitations, in general, disruption of the RAS2 locus results in an overall premature starvation response.</text>
</comment>
<comment type="miscellaneous">
    <text evidence="3">Present with 19800 molecules/cell in log phase SD medium.</text>
</comment>
<comment type="similarity">
    <text evidence="11">Belongs to the small GTPase superfamily. Ras family.</text>
</comment>
<reference key="1">
    <citation type="journal article" date="1984" name="Cell">
        <title>Genes in S. cerevisiae encoding proteins with domains homologous to the mammalian ras proteins.</title>
        <authorList>
            <person name="Powers S."/>
            <person name="Kataoka T."/>
            <person name="Fasano O."/>
            <person name="Goldfarb M."/>
            <person name="Strathern J."/>
            <person name="Broach J."/>
            <person name="Wigler M."/>
        </authorList>
    </citation>
    <scope>NUCLEOTIDE SEQUENCE [GENOMIC DNA]</scope>
</reference>
<reference key="2">
    <citation type="journal article" date="1984" name="Nucleic Acids Res.">
        <title>Nucleotide sequence of two rasH related-genes isolated from the yeast Saccharomyces cerevisiae.</title>
        <authorList>
            <person name="Dhar R."/>
            <person name="Nieto A."/>
            <person name="Koller R."/>
            <person name="DeFeo-Jones D."/>
            <person name="Scolnick E.M."/>
        </authorList>
    </citation>
    <scope>NUCLEOTIDE SEQUENCE [GENOMIC DNA]</scope>
</reference>
<reference key="3">
    <citation type="journal article" date="2000" name="J. Biol. Chem.">
        <title>ASC1/RAS2 suppresses the growth-defect on glycerol caused by the atp1-2 mutation in the yeast Saccharomyces cerevisiae.</title>
        <authorList>
            <person name="Mabuchi T."/>
            <person name="Ichimura Y."/>
            <person name="Takeda M."/>
            <person name="Douglas M.G."/>
        </authorList>
    </citation>
    <scope>NUCLEOTIDE SEQUENCE [GENOMIC DNA]</scope>
    <source>
        <strain>ATCC 64665 / S288c / DC5</strain>
    </source>
</reference>
<reference key="4">
    <citation type="submission" date="2005-07" db="EMBL/GenBank/DDBJ databases">
        <title>Molecular genetic dissection of a quantitative trait in yeast.</title>
        <authorList>
            <person name="Deutschbauer A.M."/>
            <person name="Davis R.W."/>
        </authorList>
    </citation>
    <scope>NUCLEOTIDE SEQUENCE [GENOMIC DNA]</scope>
    <source>
        <strain>SK1</strain>
    </source>
</reference>
<reference key="5">
    <citation type="journal article" date="1996" name="Yeast">
        <title>The sequence of a 21.3 kb DNA fragment from the left arm of yeast chromosome XIV reveals LEU4, MET4, POL1, RAS2, and six new open reading frames.</title>
        <authorList>
            <person name="Saiz J.E."/>
            <person name="Buitrago M.J."/>
            <person name="Soler A."/>
            <person name="del Rey F."/>
            <person name="Revuelta J.L."/>
        </authorList>
    </citation>
    <scope>NUCLEOTIDE SEQUENCE [GENOMIC DNA]</scope>
    <source>
        <strain>ATCC 96604 / S288c / FY1679</strain>
    </source>
</reference>
<reference key="6">
    <citation type="journal article" date="1997" name="Nature">
        <title>The nucleotide sequence of Saccharomyces cerevisiae chromosome XIV and its evolutionary implications.</title>
        <authorList>
            <person name="Philippsen P."/>
            <person name="Kleine K."/>
            <person name="Poehlmann R."/>
            <person name="Duesterhoeft A."/>
            <person name="Hamberg K."/>
            <person name="Hegemann J.H."/>
            <person name="Obermaier B."/>
            <person name="Urrestarazu L.A."/>
            <person name="Aert R."/>
            <person name="Albermann K."/>
            <person name="Altmann R."/>
            <person name="Andre B."/>
            <person name="Baladron V."/>
            <person name="Ballesta J.P.G."/>
            <person name="Becam A.-M."/>
            <person name="Beinhauer J.D."/>
            <person name="Boskovic J."/>
            <person name="Buitrago M.J."/>
            <person name="Bussereau F."/>
            <person name="Coster F."/>
            <person name="Crouzet M."/>
            <person name="D'Angelo M."/>
            <person name="Dal Pero F."/>
            <person name="De Antoni A."/>
            <person name="del Rey F."/>
            <person name="Doignon F."/>
            <person name="Domdey H."/>
            <person name="Dubois E."/>
            <person name="Fiedler T.A."/>
            <person name="Fleig U."/>
            <person name="Floeth M."/>
            <person name="Fritz C."/>
            <person name="Gaillardin C."/>
            <person name="Garcia-Cantalejo J.M."/>
            <person name="Glansdorff N."/>
            <person name="Goffeau A."/>
            <person name="Gueldener U."/>
            <person name="Herbert C.J."/>
            <person name="Heumann K."/>
            <person name="Heuss-Neitzel D."/>
            <person name="Hilbert H."/>
            <person name="Hinni K."/>
            <person name="Iraqui Houssaini I."/>
            <person name="Jacquet M."/>
            <person name="Jimenez A."/>
            <person name="Jonniaux J.-L."/>
            <person name="Karpfinger-Hartl L."/>
            <person name="Lanfranchi G."/>
            <person name="Lepingle A."/>
            <person name="Levesque H."/>
            <person name="Lyck R."/>
            <person name="Maftahi M."/>
            <person name="Mallet L."/>
            <person name="Maurer C.T.C."/>
            <person name="Messenguy F."/>
            <person name="Mewes H.-W."/>
            <person name="Moestl D."/>
            <person name="Nasr F."/>
            <person name="Nicaud J.-M."/>
            <person name="Niedenthal R.K."/>
            <person name="Pandolfo D."/>
            <person name="Pierard A."/>
            <person name="Piravandi E."/>
            <person name="Planta R.J."/>
            <person name="Pohl T.M."/>
            <person name="Purnelle B."/>
            <person name="Rebischung C."/>
            <person name="Remacha M.A."/>
            <person name="Revuelta J.L."/>
            <person name="Rinke M."/>
            <person name="Saiz J.E."/>
            <person name="Sartorello F."/>
            <person name="Scherens B."/>
            <person name="Sen-Gupta M."/>
            <person name="Soler-Mira A."/>
            <person name="Urbanus J.H.M."/>
            <person name="Valle G."/>
            <person name="Van Dyck L."/>
            <person name="Verhasselt P."/>
            <person name="Vierendeels F."/>
            <person name="Vissers S."/>
            <person name="Voet M."/>
            <person name="Volckaert G."/>
            <person name="Wach A."/>
            <person name="Wambutt R."/>
            <person name="Wedler H."/>
            <person name="Zollner A."/>
            <person name="Hani J."/>
        </authorList>
    </citation>
    <scope>NUCLEOTIDE SEQUENCE [LARGE SCALE GENOMIC DNA]</scope>
    <source>
        <strain>ATCC 204508 / S288c</strain>
    </source>
</reference>
<reference key="7">
    <citation type="journal article" date="2014" name="G3 (Bethesda)">
        <title>The reference genome sequence of Saccharomyces cerevisiae: Then and now.</title>
        <authorList>
            <person name="Engel S.R."/>
            <person name="Dietrich F.S."/>
            <person name="Fisk D.G."/>
            <person name="Binkley G."/>
            <person name="Balakrishnan R."/>
            <person name="Costanzo M.C."/>
            <person name="Dwight S.S."/>
            <person name="Hitz B.C."/>
            <person name="Karra K."/>
            <person name="Nash R.S."/>
            <person name="Weng S."/>
            <person name="Wong E.D."/>
            <person name="Lloyd P."/>
            <person name="Skrzypek M.S."/>
            <person name="Miyasato S.R."/>
            <person name="Simison M."/>
            <person name="Cherry J.M."/>
        </authorList>
    </citation>
    <scope>GENOME REANNOTATION</scope>
    <source>
        <strain>ATCC 204508 / S288c</strain>
    </source>
</reference>
<reference key="8">
    <citation type="journal article" date="1984" name="Cell">
        <title>Genetic analysis of yeast RAS1 and RAS2 genes.</title>
        <authorList>
            <person name="Kataoka T."/>
            <person name="Powers S."/>
            <person name="McGill C."/>
            <person name="Fasano O."/>
            <person name="Strathern J."/>
            <person name="Broach J."/>
            <person name="Wigler M."/>
        </authorList>
    </citation>
    <scope>MUTAGENESIS OF GLY-19</scope>
</reference>
<reference key="9">
    <citation type="journal article" date="1990" name="J. Biol. Chem.">
        <title>RAS2 protein of Saccharomyces cerevisiae undergoes removal of methionine at N-terminus and removal of three amino acids at C terminus.</title>
        <authorList>
            <person name="Fujiyama A."/>
            <person name="Tamanoi F."/>
        </authorList>
    </citation>
    <scope>PROTEIN SEQUENCE OF 2-22 AND 313-319</scope>
    <scope>CLEAVAGE OF INITIATOR METHIONINE</scope>
    <scope>CLEAVAGE OF C-TERMINAL PROPEPTIDE</scope>
    <scope>PALMITOYLATION AT CYS-318</scope>
</reference>
<reference key="10">
    <citation type="journal article" date="1989" name="J. Biol. Chem.">
        <title>RAS2 protein of Saccharomyces cerevisiae is methyl-esterified at its carboxyl terminus.</title>
        <authorList>
            <person name="Deschenes R.J."/>
            <person name="Stimmel J.B."/>
            <person name="Clarke S."/>
            <person name="Stock J."/>
            <person name="Broach J.R."/>
        </authorList>
    </citation>
    <scope>METHYLATION AT CYS-319</scope>
</reference>
<reference key="11">
    <citation type="journal article" date="1991" name="EMBO J.">
        <title>The Saccharomyces cerevisiae STE14 gene encodes a methyltransferase that mediates C-terminal methylation of a-factor and RAS proteins.</title>
        <authorList>
            <person name="Hrycyna C.A."/>
            <person name="Sapperstein S.K."/>
            <person name="Clarke S."/>
            <person name="Michaelis S."/>
        </authorList>
    </citation>
    <scope>METHYLATION AT CYS-319 BY STE14</scope>
</reference>
<reference key="12">
    <citation type="journal article" date="1991" name="J. Biol. Chem.">
        <title>S-farnesylation and methyl esterification of C-terminal domain of yeast RAS2 protein prior to fatty acid acylation.</title>
        <authorList>
            <person name="Fujiyama A."/>
            <person name="Tsunasawa S."/>
            <person name="Tamanoi F."/>
            <person name="Sakiyama F."/>
        </authorList>
    </citation>
    <scope>POST-TRANSLATIONAL MODIFICATIONS</scope>
</reference>
<reference key="13">
    <citation type="journal article" date="1991" name="Proc. Natl. Acad. Sci. U.S.A.">
        <title>RAM2, an essential gene of yeast, and RAM1 encode the two polypeptide components of the farnesyltransferase that prenylates a-factor and Ras proteins.</title>
        <authorList>
            <person name="He B."/>
            <person name="Chen P."/>
            <person name="Chen S.-Y."/>
            <person name="Vancura K.L."/>
            <person name="Michaelis S."/>
            <person name="Powers S."/>
        </authorList>
    </citation>
    <scope>ISOPRENYLATION AT CYS-319 BY RAM1-RAM2</scope>
</reference>
<reference key="14">
    <citation type="journal article" date="1994" name="Genetics">
        <title>Characterization of glycogen-deficient glc mutants of Saccharomyces cerevisiae.</title>
        <authorList>
            <person name="Cannon J.F."/>
            <person name="Pringle J.R."/>
            <person name="Fiechter A."/>
            <person name="Khalil M."/>
        </authorList>
    </citation>
    <scope>MUTAGENESIS OF GLU-70</scope>
</reference>
<reference key="15">
    <citation type="journal article" date="1997" name="Science">
        <title>Modulation of Ras and a-factor function by carboxyl-terminal proteolysis.</title>
        <authorList>
            <person name="Boyartchuk V.L."/>
            <person name="Ashby M.N."/>
            <person name="Rine J."/>
        </authorList>
    </citation>
    <scope>PROTEOLYTIC PROCESSING BY RCE1</scope>
</reference>
<reference key="16">
    <citation type="journal article" date="2003" name="Nature">
        <title>Global analysis of protein expression in yeast.</title>
        <authorList>
            <person name="Ghaemmaghami S."/>
            <person name="Huh W.-K."/>
            <person name="Bower K."/>
            <person name="Howson R.W."/>
            <person name="Belle A."/>
            <person name="Dephoure N."/>
            <person name="O'Shea E.K."/>
            <person name="Weissman J.S."/>
        </authorList>
    </citation>
    <scope>LEVEL OF PROTEIN EXPRESSION [LARGE SCALE ANALYSIS]</scope>
</reference>
<reference key="17">
    <citation type="journal article" date="2005" name="Mol. Cell. Proteomics">
        <title>Quantitative phosphoproteomics applied to the yeast pheromone signaling pathway.</title>
        <authorList>
            <person name="Gruhler A."/>
            <person name="Olsen J.V."/>
            <person name="Mohammed S."/>
            <person name="Mortensen P."/>
            <person name="Faergeman N.J."/>
            <person name="Mann M."/>
            <person name="Jensen O.N."/>
        </authorList>
    </citation>
    <scope>PHOSPHORYLATION [LARGE SCALE ANALYSIS] AT SER-235 AND SER-238</scope>
    <scope>IDENTIFICATION BY MASS SPECTROMETRY [LARGE SCALE ANALYSIS]</scope>
    <source>
        <strain>YAL6B</strain>
    </source>
</reference>
<reference key="18">
    <citation type="journal article" date="2007" name="J. Proteome Res.">
        <title>Large-scale phosphorylation analysis of alpha-factor-arrested Saccharomyces cerevisiae.</title>
        <authorList>
            <person name="Li X."/>
            <person name="Gerber S.A."/>
            <person name="Rudner A.D."/>
            <person name="Beausoleil S.A."/>
            <person name="Haas W."/>
            <person name="Villen J."/>
            <person name="Elias J.E."/>
            <person name="Gygi S.P."/>
        </authorList>
    </citation>
    <scope>PHOSPHORYLATION [LARGE SCALE ANALYSIS] AT SER-235</scope>
    <scope>IDENTIFICATION BY MASS SPECTROMETRY [LARGE SCALE ANALYSIS]</scope>
    <source>
        <strain>ADR376</strain>
    </source>
</reference>
<reference key="19">
    <citation type="journal article" date="2007" name="Proc. Natl. Acad. Sci. U.S.A.">
        <title>Analysis of phosphorylation sites on proteins from Saccharomyces cerevisiae by electron transfer dissociation (ETD) mass spectrometry.</title>
        <authorList>
            <person name="Chi A."/>
            <person name="Huttenhower C."/>
            <person name="Geer L.Y."/>
            <person name="Coon J.J."/>
            <person name="Syka J.E.P."/>
            <person name="Bai D.L."/>
            <person name="Shabanowitz J."/>
            <person name="Burke D.J."/>
            <person name="Troyanskaya O.G."/>
            <person name="Hunt D.F."/>
        </authorList>
    </citation>
    <scope>PHOSPHORYLATION [LARGE SCALE ANALYSIS] AT SER-198; SER-202; SER-207 AND SER-214</scope>
    <scope>IDENTIFICATION BY MASS SPECTROMETRY [LARGE SCALE ANALYSIS]</scope>
</reference>
<reference key="20">
    <citation type="journal article" date="2008" name="Mol. Cell. Proteomics">
        <title>A multidimensional chromatography technology for in-depth phosphoproteome analysis.</title>
        <authorList>
            <person name="Albuquerque C.P."/>
            <person name="Smolka M.B."/>
            <person name="Payne S.H."/>
            <person name="Bafna V."/>
            <person name="Eng J."/>
            <person name="Zhou H."/>
        </authorList>
    </citation>
    <scope>PHOSPHORYLATION [LARGE SCALE ANALYSIS] AT SER-202</scope>
    <scope>IDENTIFICATION BY MASS SPECTROMETRY [LARGE SCALE ANALYSIS]</scope>
</reference>
<reference key="21">
    <citation type="journal article" date="2009" name="Science">
        <title>Global analysis of Cdk1 substrate phosphorylation sites provides insights into evolution.</title>
        <authorList>
            <person name="Holt L.J."/>
            <person name="Tuch B.B."/>
            <person name="Villen J."/>
            <person name="Johnson A.D."/>
            <person name="Gygi S.P."/>
            <person name="Morgan D.O."/>
        </authorList>
    </citation>
    <scope>PHOSPHORYLATION [LARGE SCALE ANALYSIS] AT SER-214; SER-235 AND SER-238</scope>
    <scope>IDENTIFICATION BY MASS SPECTROMETRY [LARGE SCALE ANALYSIS]</scope>
</reference>
<reference key="22">
    <citation type="journal article" date="2012" name="Proc. Natl. Acad. Sci. U.S.A.">
        <title>N-terminal acetylome analyses and functional insights of the N-terminal acetyltransferase NatB.</title>
        <authorList>
            <person name="Van Damme P."/>
            <person name="Lasa M."/>
            <person name="Polevoda B."/>
            <person name="Gazquez C."/>
            <person name="Elosegui-Artola A."/>
            <person name="Kim D.S."/>
            <person name="De Juan-Pardo E."/>
            <person name="Demeyer K."/>
            <person name="Hole K."/>
            <person name="Larrea E."/>
            <person name="Timmerman E."/>
            <person name="Prieto J."/>
            <person name="Arnesen T."/>
            <person name="Sherman F."/>
            <person name="Gevaert K."/>
            <person name="Aldabe R."/>
        </authorList>
    </citation>
    <scope>IDENTIFICATION BY MASS SPECTROMETRY [LARGE SCALE ANALYSIS]</scope>
</reference>
<reference key="23">
    <citation type="journal article" date="2012" name="Proteomics">
        <title>Sites of ubiquitin attachment in Saccharomyces cerevisiae.</title>
        <authorList>
            <person name="Starita L.M."/>
            <person name="Lo R.S."/>
            <person name="Eng J.K."/>
            <person name="von Haller P.D."/>
            <person name="Fields S."/>
        </authorList>
    </citation>
    <scope>UBIQUITINATION [LARGE SCALE ANALYSIS] AT LYS-131</scope>
    <scope>IDENTIFICATION BY MASS SPECTROMETRY [LARGE SCALE ANALYSIS]</scope>
</reference>
<accession>P01120</accession>
<accession>D6W181</accession>
<accession>Q45U01</accession>
<gene>
    <name type="primary">RAS2</name>
    <name type="synonym">ASC1</name>
    <name type="synonym">CTN5</name>
    <name type="synonym">GLC5</name>
    <name type="ordered locus">YNL098C</name>
    <name type="ORF">N2198</name>
</gene>
<proteinExistence type="evidence at protein level"/>
<feature type="initiator methionine" description="Removed" evidence="6">
    <location>
        <position position="1"/>
    </location>
</feature>
<feature type="chain" id="PRO_0000030195" description="Ras-like protein 2">
    <location>
        <begin position="2"/>
        <end position="319"/>
    </location>
</feature>
<feature type="propeptide" id="PRO_0000030196" description="Removed in mature form" evidence="6">
    <location>
        <begin position="320"/>
        <end position="322"/>
    </location>
</feature>
<feature type="region of interest" description="Disordered" evidence="2">
    <location>
        <begin position="178"/>
        <end position="322"/>
    </location>
</feature>
<feature type="short sequence motif" description="Effector region">
    <location>
        <begin position="39"/>
        <end position="47"/>
    </location>
</feature>
<feature type="compositionally biased region" description="Polar residues" evidence="2">
    <location>
        <begin position="180"/>
        <end position="205"/>
    </location>
</feature>
<feature type="compositionally biased region" description="Polar residues" evidence="2">
    <location>
        <begin position="215"/>
        <end position="252"/>
    </location>
</feature>
<feature type="compositionally biased region" description="Low complexity" evidence="2">
    <location>
        <begin position="261"/>
        <end position="284"/>
    </location>
</feature>
<feature type="compositionally biased region" description="Polar residues" evidence="2">
    <location>
        <begin position="285"/>
        <end position="294"/>
    </location>
</feature>
<feature type="binding site" evidence="1">
    <location>
        <begin position="20"/>
        <end position="25"/>
    </location>
    <ligand>
        <name>GTP</name>
        <dbReference type="ChEBI" id="CHEBI:37565"/>
    </ligand>
</feature>
<feature type="binding site" evidence="1">
    <location>
        <begin position="36"/>
        <end position="42"/>
    </location>
    <ligand>
        <name>GTP</name>
        <dbReference type="ChEBI" id="CHEBI:37565"/>
    </ligand>
</feature>
<feature type="binding site" evidence="1">
    <location>
        <begin position="66"/>
        <end position="67"/>
    </location>
    <ligand>
        <name>GTP</name>
        <dbReference type="ChEBI" id="CHEBI:37565"/>
    </ligand>
</feature>
<feature type="binding site" evidence="1">
    <location>
        <begin position="123"/>
        <end position="126"/>
    </location>
    <ligand>
        <name>GTP</name>
        <dbReference type="ChEBI" id="CHEBI:37565"/>
    </ligand>
</feature>
<feature type="binding site" evidence="1">
    <location>
        <begin position="153"/>
        <end position="155"/>
    </location>
    <ligand>
        <name>GTP</name>
        <dbReference type="ChEBI" id="CHEBI:37565"/>
    </ligand>
</feature>
<feature type="modified residue" description="Phosphoserine" evidence="13">
    <location>
        <position position="198"/>
    </location>
</feature>
<feature type="modified residue" description="Phosphoserine" evidence="13 15">
    <location>
        <position position="202"/>
    </location>
</feature>
<feature type="modified residue" description="Phosphoserine" evidence="13">
    <location>
        <position position="207"/>
    </location>
</feature>
<feature type="modified residue" description="Phosphoserine" evidence="13 16">
    <location>
        <position position="214"/>
    </location>
</feature>
<feature type="modified residue" description="Phosphoserine" evidence="12 14 16">
    <location>
        <position position="235"/>
    </location>
</feature>
<feature type="modified residue" description="Phosphoserine" evidence="12 16">
    <location>
        <position position="238"/>
    </location>
</feature>
<feature type="modified residue" description="Cysteine methyl ester" evidence="5 7">
    <location>
        <position position="319"/>
    </location>
</feature>
<feature type="lipid moiety-binding region" description="S-palmitoyl cysteine" evidence="6">
    <location>
        <position position="318"/>
    </location>
</feature>
<feature type="lipid moiety-binding region" description="S-farnesyl cysteine" evidence="4">
    <location>
        <position position="319"/>
    </location>
</feature>
<feature type="cross-link" description="Glycyl lysine isopeptide (Lys-Gly) (interchain with G-Cter in ubiquitin)" evidence="17">
    <location>
        <position position="131"/>
    </location>
</feature>
<feature type="mutagenesis site" description="Low sporulation efficiency." evidence="8">
    <original>G</original>
    <variation>V</variation>
    <location>
        <position position="19"/>
    </location>
</feature>
<feature type="mutagenesis site" description="In GLC5-1; low glycogen accumulation and sporulation deficiency." evidence="9">
    <original>E</original>
    <variation>K</variation>
    <location>
        <position position="70"/>
    </location>
</feature>
<feature type="sequence conflict" description="In Ref. 2; CAA25207." evidence="11" ref="2">
    <original>L</original>
    <variation>P</variation>
    <location>
        <position position="108"/>
    </location>
</feature>
<feature type="sequence conflict" description="In Ref. 2; CAA25207." evidence="11" ref="2">
    <original>H</original>
    <variation>L</variation>
    <location>
        <position position="210"/>
    </location>
</feature>
<feature type="sequence conflict" description="In Ref. 1; AAA34959." evidence="11" ref="1">
    <original>D</original>
    <variation>V</variation>
    <location>
        <position position="255"/>
    </location>
</feature>
<feature type="sequence conflict" description="In Ref. 2; CAA25207." evidence="11" ref="2">
    <original>KQ</original>
    <variation>SK</variation>
    <location>
        <begin position="298"/>
        <end position="299"/>
    </location>
</feature>
<name>RAS2_YEAST</name>
<keyword id="KW-1003">Cell membrane</keyword>
<keyword id="KW-0903">Direct protein sequencing</keyword>
<keyword id="KW-0342">GTP-binding</keyword>
<keyword id="KW-0378">Hydrolase</keyword>
<keyword id="KW-1017">Isopeptide bond</keyword>
<keyword id="KW-0449">Lipoprotein</keyword>
<keyword id="KW-0472">Membrane</keyword>
<keyword id="KW-0488">Methylation</keyword>
<keyword id="KW-0547">Nucleotide-binding</keyword>
<keyword id="KW-0564">Palmitate</keyword>
<keyword id="KW-0597">Phosphoprotein</keyword>
<keyword id="KW-0636">Prenylation</keyword>
<keyword id="KW-1185">Reference proteome</keyword>
<keyword id="KW-0832">Ubl conjugation</keyword>
<dbReference type="EC" id="3.6.5.2" evidence="1"/>
<dbReference type="EMBL" id="K01971">
    <property type="protein sequence ID" value="AAA34959.1"/>
    <property type="molecule type" value="Genomic_DNA"/>
</dbReference>
<dbReference type="EMBL" id="X00528">
    <property type="protein sequence ID" value="CAA25207.1"/>
    <property type="molecule type" value="Genomic_DNA"/>
</dbReference>
<dbReference type="EMBL" id="D37950">
    <property type="protein sequence ID" value="BAA22510.1"/>
    <property type="molecule type" value="Genomic_DNA"/>
</dbReference>
<dbReference type="EMBL" id="DQ115393">
    <property type="protein sequence ID" value="AAZ22509.1"/>
    <property type="molecule type" value="Genomic_DNA"/>
</dbReference>
<dbReference type="EMBL" id="Z50161">
    <property type="protein sequence ID" value="CAA90528.1"/>
    <property type="molecule type" value="Genomic_DNA"/>
</dbReference>
<dbReference type="EMBL" id="Z71374">
    <property type="protein sequence ID" value="CAA95974.1"/>
    <property type="molecule type" value="Genomic_DNA"/>
</dbReference>
<dbReference type="EMBL" id="BK006947">
    <property type="protein sequence ID" value="DAA10447.1"/>
    <property type="molecule type" value="Genomic_DNA"/>
</dbReference>
<dbReference type="PIR" id="S58254">
    <property type="entry name" value="TVBYR2"/>
</dbReference>
<dbReference type="RefSeq" id="NP_014301.1">
    <property type="nucleotide sequence ID" value="NM_001182936.1"/>
</dbReference>
<dbReference type="SMR" id="P01120"/>
<dbReference type="BioGRID" id="35725">
    <property type="interactions" value="492"/>
</dbReference>
<dbReference type="DIP" id="DIP-2263N"/>
<dbReference type="FunCoup" id="P01120">
    <property type="interactions" value="665"/>
</dbReference>
<dbReference type="IntAct" id="P01120">
    <property type="interactions" value="19"/>
</dbReference>
<dbReference type="MINT" id="P01120"/>
<dbReference type="STRING" id="4932.YNL098C"/>
<dbReference type="BindingDB" id="P01120"/>
<dbReference type="TCDB" id="8.A.92.1.15">
    <property type="family name" value="the g-protein AlphaBetaGama complex (gpc) family"/>
</dbReference>
<dbReference type="iPTMnet" id="P01120"/>
<dbReference type="SwissPalm" id="P01120"/>
<dbReference type="PaxDb" id="4932-YNL098C"/>
<dbReference type="PeptideAtlas" id="P01120"/>
<dbReference type="EnsemblFungi" id="YNL098C_mRNA">
    <property type="protein sequence ID" value="YNL098C"/>
    <property type="gene ID" value="YNL098C"/>
</dbReference>
<dbReference type="GeneID" id="855625"/>
<dbReference type="KEGG" id="sce:YNL098C"/>
<dbReference type="AGR" id="SGD:S000005042"/>
<dbReference type="SGD" id="S000005042">
    <property type="gene designation" value="RAS2"/>
</dbReference>
<dbReference type="VEuPathDB" id="FungiDB:YNL098C"/>
<dbReference type="eggNOG" id="KOG0395">
    <property type="taxonomic scope" value="Eukaryota"/>
</dbReference>
<dbReference type="GeneTree" id="ENSGT00940000176617"/>
<dbReference type="HOGENOM" id="CLU_041217_9_0_1"/>
<dbReference type="InParanoid" id="P01120"/>
<dbReference type="OMA" id="MXNAANG"/>
<dbReference type="OrthoDB" id="5976022at2759"/>
<dbReference type="BioCyc" id="YEAST:G3O-33126-MONOMER"/>
<dbReference type="Reactome" id="R-SCE-9696273">
    <property type="pathway name" value="RND1 GTPase cycle"/>
</dbReference>
<dbReference type="BioGRID-ORCS" id="855625">
    <property type="hits" value="3 hits in 10 CRISPR screens"/>
</dbReference>
<dbReference type="PRO" id="PR:P01120"/>
<dbReference type="Proteomes" id="UP000002311">
    <property type="component" value="Chromosome XIV"/>
</dbReference>
<dbReference type="RNAct" id="P01120">
    <property type="molecule type" value="protein"/>
</dbReference>
<dbReference type="GO" id="GO:0071944">
    <property type="term" value="C:cell periphery"/>
    <property type="evidence" value="ECO:0007005"/>
    <property type="project" value="SGD"/>
</dbReference>
<dbReference type="GO" id="GO:0005789">
    <property type="term" value="C:endoplasmic reticulum membrane"/>
    <property type="evidence" value="ECO:0000314"/>
    <property type="project" value="SGD"/>
</dbReference>
<dbReference type="GO" id="GO:0005739">
    <property type="term" value="C:mitochondrion"/>
    <property type="evidence" value="ECO:0000314"/>
    <property type="project" value="SGD"/>
</dbReference>
<dbReference type="GO" id="GO:0005634">
    <property type="term" value="C:nucleus"/>
    <property type="evidence" value="ECO:0000314"/>
    <property type="project" value="SGD"/>
</dbReference>
<dbReference type="GO" id="GO:0005886">
    <property type="term" value="C:plasma membrane"/>
    <property type="evidence" value="ECO:0000314"/>
    <property type="project" value="SGD"/>
</dbReference>
<dbReference type="GO" id="GO:0003925">
    <property type="term" value="F:G protein activity"/>
    <property type="evidence" value="ECO:0007669"/>
    <property type="project" value="UniProtKB-EC"/>
</dbReference>
<dbReference type="GO" id="GO:0019003">
    <property type="term" value="F:GDP binding"/>
    <property type="evidence" value="ECO:0000318"/>
    <property type="project" value="GO_Central"/>
</dbReference>
<dbReference type="GO" id="GO:0005525">
    <property type="term" value="F:GTP binding"/>
    <property type="evidence" value="ECO:0000314"/>
    <property type="project" value="SGD"/>
</dbReference>
<dbReference type="GO" id="GO:0003924">
    <property type="term" value="F:GTPase activity"/>
    <property type="evidence" value="ECO:0000314"/>
    <property type="project" value="SGD"/>
</dbReference>
<dbReference type="GO" id="GO:0030437">
    <property type="term" value="P:ascospore formation"/>
    <property type="evidence" value="ECO:0000315"/>
    <property type="project" value="SGD"/>
</dbReference>
<dbReference type="GO" id="GO:0042149">
    <property type="term" value="P:cellular response to glucose starvation"/>
    <property type="evidence" value="ECO:0000315"/>
    <property type="project" value="SGD"/>
</dbReference>
<dbReference type="GO" id="GO:0032258">
    <property type="term" value="P:cytoplasm to vacuole targeting by the Cvt pathway"/>
    <property type="evidence" value="ECO:0000315"/>
    <property type="project" value="SGD"/>
</dbReference>
<dbReference type="GO" id="GO:0016236">
    <property type="term" value="P:macroautophagy"/>
    <property type="evidence" value="ECO:0000316"/>
    <property type="project" value="SGD"/>
</dbReference>
<dbReference type="GO" id="GO:2000222">
    <property type="term" value="P:positive regulation of pseudohyphal growth"/>
    <property type="evidence" value="ECO:0000315"/>
    <property type="project" value="SGD"/>
</dbReference>
<dbReference type="GO" id="GO:0000411">
    <property type="term" value="P:positive regulation of transcription by galactose"/>
    <property type="evidence" value="ECO:0000315"/>
    <property type="project" value="SGD"/>
</dbReference>
<dbReference type="GO" id="GO:0097271">
    <property type="term" value="P:protein localization to bud neck"/>
    <property type="evidence" value="ECO:0000316"/>
    <property type="project" value="SGD"/>
</dbReference>
<dbReference type="GO" id="GO:0010603">
    <property type="term" value="P:regulation of cytoplasmic mRNA processing body assembly"/>
    <property type="evidence" value="ECO:0000315"/>
    <property type="project" value="SGD"/>
</dbReference>
<dbReference type="GO" id="GO:0032880">
    <property type="term" value="P:regulation of protein localization"/>
    <property type="evidence" value="ECO:0000315"/>
    <property type="project" value="SGD"/>
</dbReference>
<dbReference type="GO" id="GO:0007165">
    <property type="term" value="P:signal transduction"/>
    <property type="evidence" value="ECO:0007669"/>
    <property type="project" value="InterPro"/>
</dbReference>
<dbReference type="CDD" id="cd04138">
    <property type="entry name" value="H_N_K_Ras_like"/>
    <property type="match status" value="1"/>
</dbReference>
<dbReference type="FunFam" id="3.40.50.300:FF:000080">
    <property type="entry name" value="Ras-like GTPase Ras1"/>
    <property type="match status" value="1"/>
</dbReference>
<dbReference type="Gene3D" id="3.40.50.300">
    <property type="entry name" value="P-loop containing nucleotide triphosphate hydrolases"/>
    <property type="match status" value="1"/>
</dbReference>
<dbReference type="InterPro" id="IPR027417">
    <property type="entry name" value="P-loop_NTPase"/>
</dbReference>
<dbReference type="InterPro" id="IPR005225">
    <property type="entry name" value="Small_GTP-bd"/>
</dbReference>
<dbReference type="InterPro" id="IPR001806">
    <property type="entry name" value="Small_GTPase"/>
</dbReference>
<dbReference type="InterPro" id="IPR020849">
    <property type="entry name" value="Small_GTPase_Ras-type"/>
</dbReference>
<dbReference type="NCBIfam" id="TIGR00231">
    <property type="entry name" value="small_GTP"/>
    <property type="match status" value="1"/>
</dbReference>
<dbReference type="PANTHER" id="PTHR24070">
    <property type="entry name" value="RAS, DI-RAS, AND RHEB FAMILY MEMBERS OF SMALL GTPASE SUPERFAMILY"/>
    <property type="match status" value="1"/>
</dbReference>
<dbReference type="Pfam" id="PF00071">
    <property type="entry name" value="Ras"/>
    <property type="match status" value="1"/>
</dbReference>
<dbReference type="PRINTS" id="PR00449">
    <property type="entry name" value="RASTRNSFRMNG"/>
</dbReference>
<dbReference type="SMART" id="SM00175">
    <property type="entry name" value="RAB"/>
    <property type="match status" value="1"/>
</dbReference>
<dbReference type="SMART" id="SM00176">
    <property type="entry name" value="RAN"/>
    <property type="match status" value="1"/>
</dbReference>
<dbReference type="SMART" id="SM00173">
    <property type="entry name" value="RAS"/>
    <property type="match status" value="1"/>
</dbReference>
<dbReference type="SMART" id="SM00174">
    <property type="entry name" value="RHO"/>
    <property type="match status" value="1"/>
</dbReference>
<dbReference type="SUPFAM" id="SSF52540">
    <property type="entry name" value="P-loop containing nucleoside triphosphate hydrolases"/>
    <property type="match status" value="1"/>
</dbReference>
<dbReference type="PROSITE" id="PS51421">
    <property type="entry name" value="RAS"/>
    <property type="match status" value="1"/>
</dbReference>
<evidence type="ECO:0000250" key="1">
    <source>
        <dbReference type="UniProtKB" id="P01112"/>
    </source>
</evidence>
<evidence type="ECO:0000256" key="2">
    <source>
        <dbReference type="SAM" id="MobiDB-lite"/>
    </source>
</evidence>
<evidence type="ECO:0000269" key="3">
    <source>
    </source>
</evidence>
<evidence type="ECO:0000269" key="4">
    <source>
    </source>
</evidence>
<evidence type="ECO:0000269" key="5">
    <source>
    </source>
</evidence>
<evidence type="ECO:0000269" key="6">
    <source>
    </source>
</evidence>
<evidence type="ECO:0000269" key="7">
    <source>
    </source>
</evidence>
<evidence type="ECO:0000269" key="8">
    <source>
    </source>
</evidence>
<evidence type="ECO:0000269" key="9">
    <source>
    </source>
</evidence>
<evidence type="ECO:0000269" key="10">
    <source>
    </source>
</evidence>
<evidence type="ECO:0000305" key="11"/>
<evidence type="ECO:0007744" key="12">
    <source>
    </source>
</evidence>
<evidence type="ECO:0007744" key="13">
    <source>
    </source>
</evidence>
<evidence type="ECO:0007744" key="14">
    <source>
    </source>
</evidence>
<evidence type="ECO:0007744" key="15">
    <source>
    </source>
</evidence>
<evidence type="ECO:0007744" key="16">
    <source>
    </source>
</evidence>
<evidence type="ECO:0007744" key="17">
    <source>
    </source>
</evidence>
<protein>
    <recommendedName>
        <fullName>Ras-like protein 2</fullName>
        <ecNumber evidence="1">3.6.5.2</ecNumber>
    </recommendedName>
</protein>
<sequence>MPLNKSNIREYKLVVVGGGGVGKSALTIQLTQSHFVDEYDPTIEDSYRKQVVIDDEVSILDILDTAGQEEYSAMREQYMRNGEGFLLVYSITSKSSLDELMTYYQQILRVKDTDYVPIVVVGNKSDLENEKQVSYQDGLNMAKQMNAPFLETSAKQAINVEEAFYTLARLVRDEGGKYNKTLTENDNSKQTSQDTKGSGANSVPRNSGGHRKMSNAANGKNVNSSTTVVNARNASIESKTGLAGNQATNGKTQTDRTNIDNSTGQAGQANAQSANTVNNRVNNNSKAGQVSNAKQARKQQAAPGGNTSEASKSGSGGCCIIS</sequence>